<protein>
    <recommendedName>
        <fullName evidence="1">Bifunctional protein FolD</fullName>
    </recommendedName>
    <domain>
        <recommendedName>
            <fullName evidence="1">Methylenetetrahydrofolate dehydrogenase</fullName>
            <ecNumber evidence="1">1.5.1.5</ecNumber>
        </recommendedName>
    </domain>
    <domain>
        <recommendedName>
            <fullName evidence="1">Methenyltetrahydrofolate cyclohydrolase</fullName>
            <ecNumber evidence="1">3.5.4.9</ecNumber>
        </recommendedName>
    </domain>
</protein>
<sequence>MSARTLDGKATAAAIKAELRERVSALRERGVVPGLGTILVGDDPGSQWYVAGKHRDCAEVGIASLRRDLPAEISQAELEAVVEQLNADPGCTGFIVQLPLPSHLDTDAVLELVDPAKDADGLHPTNLGRLVLNVNRPITTPLPCTPRGVIELMLRHGIDLAGKDVVVVGRGVTVGRSIGALLTRREVNATVTLTHTGTKSLDEHLRSADVIVAAAGVPGLVSAENVKPGAIVLDVGVSRVEDPETGKSRVAGDVAADVAGVASWISPNPGGVGPMTRALLLQNVVESAERALR</sequence>
<name>FOLD_LEIXX</name>
<gene>
    <name evidence="1" type="primary">folD</name>
    <name type="ordered locus">Lxx18630</name>
</gene>
<accession>Q6ADF1</accession>
<proteinExistence type="inferred from homology"/>
<evidence type="ECO:0000255" key="1">
    <source>
        <dbReference type="HAMAP-Rule" id="MF_01576"/>
    </source>
</evidence>
<comment type="function">
    <text evidence="1">Catalyzes the oxidation of 5,10-methylenetetrahydrofolate to 5,10-methenyltetrahydrofolate and then the hydrolysis of 5,10-methenyltetrahydrofolate to 10-formyltetrahydrofolate.</text>
</comment>
<comment type="catalytic activity">
    <reaction evidence="1">
        <text>(6R)-5,10-methylene-5,6,7,8-tetrahydrofolate + NADP(+) = (6R)-5,10-methenyltetrahydrofolate + NADPH</text>
        <dbReference type="Rhea" id="RHEA:22812"/>
        <dbReference type="ChEBI" id="CHEBI:15636"/>
        <dbReference type="ChEBI" id="CHEBI:57455"/>
        <dbReference type="ChEBI" id="CHEBI:57783"/>
        <dbReference type="ChEBI" id="CHEBI:58349"/>
        <dbReference type="EC" id="1.5.1.5"/>
    </reaction>
</comment>
<comment type="catalytic activity">
    <reaction evidence="1">
        <text>(6R)-5,10-methenyltetrahydrofolate + H2O = (6R)-10-formyltetrahydrofolate + H(+)</text>
        <dbReference type="Rhea" id="RHEA:23700"/>
        <dbReference type="ChEBI" id="CHEBI:15377"/>
        <dbReference type="ChEBI" id="CHEBI:15378"/>
        <dbReference type="ChEBI" id="CHEBI:57455"/>
        <dbReference type="ChEBI" id="CHEBI:195366"/>
        <dbReference type="EC" id="3.5.4.9"/>
    </reaction>
</comment>
<comment type="pathway">
    <text evidence="1">One-carbon metabolism; tetrahydrofolate interconversion.</text>
</comment>
<comment type="subunit">
    <text evidence="1">Homodimer.</text>
</comment>
<comment type="similarity">
    <text evidence="1">Belongs to the tetrahydrofolate dehydrogenase/cyclohydrolase family.</text>
</comment>
<organism>
    <name type="scientific">Leifsonia xyli subsp. xyli (strain CTCB07)</name>
    <dbReference type="NCBI Taxonomy" id="281090"/>
    <lineage>
        <taxon>Bacteria</taxon>
        <taxon>Bacillati</taxon>
        <taxon>Actinomycetota</taxon>
        <taxon>Actinomycetes</taxon>
        <taxon>Micrococcales</taxon>
        <taxon>Microbacteriaceae</taxon>
        <taxon>Leifsonia</taxon>
    </lineage>
</organism>
<reference key="1">
    <citation type="journal article" date="2004" name="Mol. Plant Microbe Interact.">
        <title>The genome sequence of the Gram-positive sugarcane pathogen Leifsonia xyli subsp. xyli.</title>
        <authorList>
            <person name="Monteiro-Vitorello C.B."/>
            <person name="Camargo L.E.A."/>
            <person name="Van Sluys M.A."/>
            <person name="Kitajima J.P."/>
            <person name="Truffi D."/>
            <person name="do Amaral A.M."/>
            <person name="Harakava R."/>
            <person name="de Oliveira J.C.F."/>
            <person name="Wood D."/>
            <person name="de Oliveira M.C."/>
            <person name="Miyaki C.Y."/>
            <person name="Takita M.A."/>
            <person name="da Silva A.C.R."/>
            <person name="Furlan L.R."/>
            <person name="Carraro D.M."/>
            <person name="Camarotte G."/>
            <person name="Almeida N.F. Jr."/>
            <person name="Carrer H."/>
            <person name="Coutinho L.L."/>
            <person name="El-Dorry H.A."/>
            <person name="Ferro M.I.T."/>
            <person name="Gagliardi P.R."/>
            <person name="Giglioti E."/>
            <person name="Goldman M.H.S."/>
            <person name="Goldman G.H."/>
            <person name="Kimura E.T."/>
            <person name="Ferro E.S."/>
            <person name="Kuramae E.E."/>
            <person name="Lemos E.G.M."/>
            <person name="Lemos M.V.F."/>
            <person name="Mauro S.M.Z."/>
            <person name="Machado M.A."/>
            <person name="Marino C.L."/>
            <person name="Menck C.F."/>
            <person name="Nunes L.R."/>
            <person name="Oliveira R.C."/>
            <person name="Pereira G.G."/>
            <person name="Siqueira W."/>
            <person name="de Souza A.A."/>
            <person name="Tsai S.M."/>
            <person name="Zanca A.S."/>
            <person name="Simpson A.J.G."/>
            <person name="Brumbley S.M."/>
            <person name="Setubal J.C."/>
        </authorList>
    </citation>
    <scope>NUCLEOTIDE SEQUENCE [LARGE SCALE GENOMIC DNA]</scope>
    <source>
        <strain>CTCB07</strain>
    </source>
</reference>
<feature type="chain" id="PRO_0000268385" description="Bifunctional protein FolD">
    <location>
        <begin position="1"/>
        <end position="293"/>
    </location>
</feature>
<feature type="binding site" evidence="1">
    <location>
        <begin position="169"/>
        <end position="171"/>
    </location>
    <ligand>
        <name>NADP(+)</name>
        <dbReference type="ChEBI" id="CHEBI:58349"/>
    </ligand>
</feature>
<feature type="binding site" evidence="1">
    <location>
        <position position="196"/>
    </location>
    <ligand>
        <name>NADP(+)</name>
        <dbReference type="ChEBI" id="CHEBI:58349"/>
    </ligand>
</feature>
<feature type="binding site" evidence="1">
    <location>
        <position position="237"/>
    </location>
    <ligand>
        <name>NADP(+)</name>
        <dbReference type="ChEBI" id="CHEBI:58349"/>
    </ligand>
</feature>
<keyword id="KW-0028">Amino-acid biosynthesis</keyword>
<keyword id="KW-0368">Histidine biosynthesis</keyword>
<keyword id="KW-0378">Hydrolase</keyword>
<keyword id="KW-0486">Methionine biosynthesis</keyword>
<keyword id="KW-0511">Multifunctional enzyme</keyword>
<keyword id="KW-0521">NADP</keyword>
<keyword id="KW-0554">One-carbon metabolism</keyword>
<keyword id="KW-0560">Oxidoreductase</keyword>
<keyword id="KW-0658">Purine biosynthesis</keyword>
<keyword id="KW-1185">Reference proteome</keyword>
<dbReference type="EC" id="1.5.1.5" evidence="1"/>
<dbReference type="EC" id="3.5.4.9" evidence="1"/>
<dbReference type="EMBL" id="AE016822">
    <property type="protein sequence ID" value="AAT89594.1"/>
    <property type="molecule type" value="Genomic_DNA"/>
</dbReference>
<dbReference type="RefSeq" id="WP_011186582.1">
    <property type="nucleotide sequence ID" value="NC_006087.1"/>
</dbReference>
<dbReference type="SMR" id="Q6ADF1"/>
<dbReference type="STRING" id="281090.Lxx18630"/>
<dbReference type="KEGG" id="lxx:Lxx18630"/>
<dbReference type="eggNOG" id="COG0190">
    <property type="taxonomic scope" value="Bacteria"/>
</dbReference>
<dbReference type="HOGENOM" id="CLU_034045_3_0_11"/>
<dbReference type="UniPathway" id="UPA00193"/>
<dbReference type="Proteomes" id="UP000001306">
    <property type="component" value="Chromosome"/>
</dbReference>
<dbReference type="GO" id="GO:0005829">
    <property type="term" value="C:cytosol"/>
    <property type="evidence" value="ECO:0007669"/>
    <property type="project" value="TreeGrafter"/>
</dbReference>
<dbReference type="GO" id="GO:0004477">
    <property type="term" value="F:methenyltetrahydrofolate cyclohydrolase activity"/>
    <property type="evidence" value="ECO:0007669"/>
    <property type="project" value="UniProtKB-UniRule"/>
</dbReference>
<dbReference type="GO" id="GO:0004488">
    <property type="term" value="F:methylenetetrahydrofolate dehydrogenase (NADP+) activity"/>
    <property type="evidence" value="ECO:0007669"/>
    <property type="project" value="UniProtKB-UniRule"/>
</dbReference>
<dbReference type="GO" id="GO:0000105">
    <property type="term" value="P:L-histidine biosynthetic process"/>
    <property type="evidence" value="ECO:0007669"/>
    <property type="project" value="UniProtKB-KW"/>
</dbReference>
<dbReference type="GO" id="GO:0009086">
    <property type="term" value="P:methionine biosynthetic process"/>
    <property type="evidence" value="ECO:0007669"/>
    <property type="project" value="UniProtKB-KW"/>
</dbReference>
<dbReference type="GO" id="GO:0006164">
    <property type="term" value="P:purine nucleotide biosynthetic process"/>
    <property type="evidence" value="ECO:0007669"/>
    <property type="project" value="UniProtKB-KW"/>
</dbReference>
<dbReference type="GO" id="GO:0035999">
    <property type="term" value="P:tetrahydrofolate interconversion"/>
    <property type="evidence" value="ECO:0007669"/>
    <property type="project" value="UniProtKB-UniRule"/>
</dbReference>
<dbReference type="CDD" id="cd01080">
    <property type="entry name" value="NAD_bind_m-THF_DH_Cyclohyd"/>
    <property type="match status" value="1"/>
</dbReference>
<dbReference type="FunFam" id="3.40.50.10860:FF:000005">
    <property type="entry name" value="C-1-tetrahydrofolate synthase, cytoplasmic, putative"/>
    <property type="match status" value="1"/>
</dbReference>
<dbReference type="Gene3D" id="3.40.50.10860">
    <property type="entry name" value="Leucine Dehydrogenase, chain A, domain 1"/>
    <property type="match status" value="1"/>
</dbReference>
<dbReference type="Gene3D" id="3.40.50.720">
    <property type="entry name" value="NAD(P)-binding Rossmann-like Domain"/>
    <property type="match status" value="1"/>
</dbReference>
<dbReference type="HAMAP" id="MF_01576">
    <property type="entry name" value="THF_DHG_CYH"/>
    <property type="match status" value="1"/>
</dbReference>
<dbReference type="InterPro" id="IPR046346">
    <property type="entry name" value="Aminoacid_DH-like_N_sf"/>
</dbReference>
<dbReference type="InterPro" id="IPR036291">
    <property type="entry name" value="NAD(P)-bd_dom_sf"/>
</dbReference>
<dbReference type="InterPro" id="IPR000672">
    <property type="entry name" value="THF_DH/CycHdrlase"/>
</dbReference>
<dbReference type="InterPro" id="IPR020630">
    <property type="entry name" value="THF_DH/CycHdrlase_cat_dom"/>
</dbReference>
<dbReference type="InterPro" id="IPR020631">
    <property type="entry name" value="THF_DH/CycHdrlase_NAD-bd_dom"/>
</dbReference>
<dbReference type="NCBIfam" id="NF010789">
    <property type="entry name" value="PRK14193.1"/>
    <property type="match status" value="1"/>
</dbReference>
<dbReference type="PANTHER" id="PTHR48099:SF5">
    <property type="entry name" value="C-1-TETRAHYDROFOLATE SYNTHASE, CYTOPLASMIC"/>
    <property type="match status" value="1"/>
</dbReference>
<dbReference type="PANTHER" id="PTHR48099">
    <property type="entry name" value="C-1-TETRAHYDROFOLATE SYNTHASE, CYTOPLASMIC-RELATED"/>
    <property type="match status" value="1"/>
</dbReference>
<dbReference type="Pfam" id="PF00763">
    <property type="entry name" value="THF_DHG_CYH"/>
    <property type="match status" value="1"/>
</dbReference>
<dbReference type="Pfam" id="PF02882">
    <property type="entry name" value="THF_DHG_CYH_C"/>
    <property type="match status" value="1"/>
</dbReference>
<dbReference type="PRINTS" id="PR00085">
    <property type="entry name" value="THFDHDRGNASE"/>
</dbReference>
<dbReference type="SUPFAM" id="SSF53223">
    <property type="entry name" value="Aminoacid dehydrogenase-like, N-terminal domain"/>
    <property type="match status" value="1"/>
</dbReference>
<dbReference type="SUPFAM" id="SSF51735">
    <property type="entry name" value="NAD(P)-binding Rossmann-fold domains"/>
    <property type="match status" value="1"/>
</dbReference>